<sequence>MSKSVQLIKDHDVKWIDLRFTDTKGTQHHVTMPARDALEDDFFEVGKMFDGSSIAGWKGIEASDMILLPDDDTAVLDPFTEDATLILVCDIIEPSTMQGYDRDPRAIAHRAEEYLKTTGIGDTVFAGPEPEFFIFDEVKFKSDISGSMFKIYSEQGSWMSDQDIEGGNKGHRPGVKGGYFPVPPFDHDHEIRTAMCNALEEMGQTVEVHHHEVATAGQNEIGVKFNTLVKKADEVQTLKYVVHNVADAYGRTATFMPKPLYGDNGSGMHVHMSIAKDGKNTFAGEGYAGLSETALYFIGGIIKHGKALNGFTNPATNSYKRLVPGFEAPVMLAYSARNRSASIRIPYVNSPRGRRIEARFPDPAANPYLAFAALLMAGLDGIQNKIHPGDAADKNLYDLPPEEAKEIPQVCGSLKEALEELDKGRAFLTKGGVFSDDFIDAYIALKSEEEIKVRTFVHPLEYELYYSC</sequence>
<gene>
    <name evidence="10" type="primary">glnA</name>
</gene>
<name>GLN1B_PSETA</name>
<protein>
    <recommendedName>
        <fullName evidence="10">Glutamine synthetase</fullName>
        <shortName evidence="10">GS</shortName>
        <ecNumber evidence="8 9">6.3.1.2</ecNumber>
    </recommendedName>
    <alternativeName>
        <fullName evidence="11">Glutamate--ammonia ligase</fullName>
    </alternativeName>
    <alternativeName>
        <fullName evidence="11">Glutamine synthetase I beta</fullName>
        <shortName evidence="11">GSI beta</shortName>
    </alternativeName>
</protein>
<organism>
    <name type="scientific">Pseudomonas taetrolens</name>
    <dbReference type="NCBI Taxonomy" id="47884"/>
    <lineage>
        <taxon>Bacteria</taxon>
        <taxon>Pseudomonadati</taxon>
        <taxon>Pseudomonadota</taxon>
        <taxon>Gammaproteobacteria</taxon>
        <taxon>Pseudomonadales</taxon>
        <taxon>Pseudomonadaceae</taxon>
        <taxon>Pseudomonas</taxon>
    </lineage>
</organism>
<dbReference type="EC" id="6.3.1.2" evidence="8 9"/>
<dbReference type="EMBL" id="AB233456">
    <property type="protein sequence ID" value="BAE44186.1"/>
    <property type="molecule type" value="Genomic_DNA"/>
</dbReference>
<dbReference type="SMR" id="Q3V5W6"/>
<dbReference type="STRING" id="47884.SAMN04490203_4421"/>
<dbReference type="SABIO-RK" id="Q3V5W6"/>
<dbReference type="GO" id="GO:0005737">
    <property type="term" value="C:cytoplasm"/>
    <property type="evidence" value="ECO:0007669"/>
    <property type="project" value="TreeGrafter"/>
</dbReference>
<dbReference type="GO" id="GO:0016020">
    <property type="term" value="C:membrane"/>
    <property type="evidence" value="ECO:0007669"/>
    <property type="project" value="TreeGrafter"/>
</dbReference>
<dbReference type="GO" id="GO:0005524">
    <property type="term" value="F:ATP binding"/>
    <property type="evidence" value="ECO:0007669"/>
    <property type="project" value="UniProtKB-KW"/>
</dbReference>
<dbReference type="GO" id="GO:0004356">
    <property type="term" value="F:glutamine synthetase activity"/>
    <property type="evidence" value="ECO:0000314"/>
    <property type="project" value="UniProtKB"/>
</dbReference>
<dbReference type="GO" id="GO:0046872">
    <property type="term" value="F:metal ion binding"/>
    <property type="evidence" value="ECO:0007669"/>
    <property type="project" value="UniProtKB-KW"/>
</dbReference>
<dbReference type="GO" id="GO:0006542">
    <property type="term" value="P:glutamine biosynthetic process"/>
    <property type="evidence" value="ECO:0007669"/>
    <property type="project" value="InterPro"/>
</dbReference>
<dbReference type="GO" id="GO:0019740">
    <property type="term" value="P:nitrogen utilization"/>
    <property type="evidence" value="ECO:0007669"/>
    <property type="project" value="TreeGrafter"/>
</dbReference>
<dbReference type="FunFam" id="3.10.20.70:FF:000001">
    <property type="entry name" value="Glutamine synthetase"/>
    <property type="match status" value="1"/>
</dbReference>
<dbReference type="FunFam" id="3.30.590.10:FF:000001">
    <property type="entry name" value="Glutamine synthetase"/>
    <property type="match status" value="1"/>
</dbReference>
<dbReference type="Gene3D" id="3.10.20.70">
    <property type="entry name" value="Glutamine synthetase, N-terminal domain"/>
    <property type="match status" value="1"/>
</dbReference>
<dbReference type="Gene3D" id="3.30.590.10">
    <property type="entry name" value="Glutamine synthetase/guanido kinase, catalytic domain"/>
    <property type="match status" value="1"/>
</dbReference>
<dbReference type="InterPro" id="IPR008147">
    <property type="entry name" value="Gln_synt_N"/>
</dbReference>
<dbReference type="InterPro" id="IPR036651">
    <property type="entry name" value="Gln_synt_N_sf"/>
</dbReference>
<dbReference type="InterPro" id="IPR014746">
    <property type="entry name" value="Gln_synth/guanido_kin_cat_dom"/>
</dbReference>
<dbReference type="InterPro" id="IPR008146">
    <property type="entry name" value="Gln_synth_cat_dom"/>
</dbReference>
<dbReference type="InterPro" id="IPR027303">
    <property type="entry name" value="Gln_synth_gly_rich_site"/>
</dbReference>
<dbReference type="InterPro" id="IPR004809">
    <property type="entry name" value="Gln_synth_I"/>
</dbReference>
<dbReference type="InterPro" id="IPR001637">
    <property type="entry name" value="Gln_synth_I_adenylation_site"/>
</dbReference>
<dbReference type="InterPro" id="IPR027302">
    <property type="entry name" value="Gln_synth_N_conserv_site"/>
</dbReference>
<dbReference type="NCBIfam" id="TIGR00653">
    <property type="entry name" value="GlnA"/>
    <property type="match status" value="1"/>
</dbReference>
<dbReference type="NCBIfam" id="NF007006">
    <property type="entry name" value="PRK09469.1"/>
    <property type="match status" value="1"/>
</dbReference>
<dbReference type="PANTHER" id="PTHR43407">
    <property type="entry name" value="GLUTAMINE SYNTHETASE"/>
    <property type="match status" value="1"/>
</dbReference>
<dbReference type="PANTHER" id="PTHR43407:SF2">
    <property type="entry name" value="GLUTAMINE SYNTHETASE"/>
    <property type="match status" value="1"/>
</dbReference>
<dbReference type="Pfam" id="PF00120">
    <property type="entry name" value="Gln-synt_C"/>
    <property type="match status" value="1"/>
</dbReference>
<dbReference type="Pfam" id="PF03951">
    <property type="entry name" value="Gln-synt_N"/>
    <property type="match status" value="1"/>
</dbReference>
<dbReference type="SMART" id="SM01230">
    <property type="entry name" value="Gln-synt_C"/>
    <property type="match status" value="1"/>
</dbReference>
<dbReference type="SUPFAM" id="SSF54368">
    <property type="entry name" value="Glutamine synthetase, N-terminal domain"/>
    <property type="match status" value="1"/>
</dbReference>
<dbReference type="SUPFAM" id="SSF55931">
    <property type="entry name" value="Glutamine synthetase/guanido kinase"/>
    <property type="match status" value="1"/>
</dbReference>
<dbReference type="PROSITE" id="PS00180">
    <property type="entry name" value="GLNA_1"/>
    <property type="match status" value="1"/>
</dbReference>
<dbReference type="PROSITE" id="PS00182">
    <property type="entry name" value="GLNA_ADENYLATION"/>
    <property type="match status" value="1"/>
</dbReference>
<dbReference type="PROSITE" id="PS00181">
    <property type="entry name" value="GLNA_ATP"/>
    <property type="match status" value="1"/>
</dbReference>
<dbReference type="PROSITE" id="PS51986">
    <property type="entry name" value="GS_BETA_GRASP"/>
    <property type="match status" value="1"/>
</dbReference>
<dbReference type="PROSITE" id="PS51987">
    <property type="entry name" value="GS_CATALYTIC"/>
    <property type="match status" value="1"/>
</dbReference>
<keyword id="KW-0067">ATP-binding</keyword>
<keyword id="KW-0903">Direct protein sequencing</keyword>
<keyword id="KW-0436">Ligase</keyword>
<keyword id="KW-0460">Magnesium</keyword>
<keyword id="KW-0464">Manganese</keyword>
<keyword id="KW-0479">Metal-binding</keyword>
<keyword id="KW-0547">Nucleotide-binding</keyword>
<keyword id="KW-0597">Phosphoprotein</keyword>
<comment type="function">
    <text evidence="8 9">Catalyzes the formation of glutamine from glutamate and ammonia (PubMed:15388964, PubMed:16495669). In vitro, can also use hydroxylamine, methylamine and ethylamine, with 32%, 7% and 1% activity compared to ammonia, respectively (PubMed:15388964).</text>
</comment>
<comment type="catalytic activity">
    <reaction evidence="8 9">
        <text>L-glutamate + NH4(+) + ATP = L-glutamine + ADP + phosphate + H(+)</text>
        <dbReference type="Rhea" id="RHEA:16169"/>
        <dbReference type="ChEBI" id="CHEBI:15378"/>
        <dbReference type="ChEBI" id="CHEBI:28938"/>
        <dbReference type="ChEBI" id="CHEBI:29985"/>
        <dbReference type="ChEBI" id="CHEBI:30616"/>
        <dbReference type="ChEBI" id="CHEBI:43474"/>
        <dbReference type="ChEBI" id="CHEBI:58359"/>
        <dbReference type="ChEBI" id="CHEBI:456216"/>
        <dbReference type="EC" id="6.3.1.2"/>
    </reaction>
</comment>
<comment type="cofactor">
    <cofactor evidence="8 9">
        <name>Mg(2+)</name>
        <dbReference type="ChEBI" id="CHEBI:18420"/>
    </cofactor>
    <cofactor evidence="8 9">
        <name>Mn(2+)</name>
        <dbReference type="ChEBI" id="CHEBI:29035"/>
    </cofactor>
    <text evidence="8">Binds 2 Mg(2+) or Mn(2+) ions per subunit, however the activity with Mg(2+) is about 10-fold higher than with Mn(2+).</text>
</comment>
<comment type="activity regulation">
    <text evidence="9">When cellular nitrogen levels are high, the C-terminal adenylyl transferase (AT) of GlnE inhibits GlnA by covalent transfer of an adenylyl group from ATP to Tyr-397. Conversely, when nitrogen levels are low, the N-terminal adenylyl removase (AR) of GlnE activates GlnA by removing the adenylyl group by phosphorolysis. The fully adenylated enzyme complex is inactive (Probable).</text>
</comment>
<comment type="biophysicochemical properties">
    <phDependence>
        <text evidence="8">Optimum pH is 8.0 (in the presence 30 mM Mg(2+)) and 7.5 (in the presence of 3 mM Mn(2+)).</text>
    </phDependence>
</comment>
<comment type="subunit">
    <text evidence="8 12">Oligomer of 12 subunits arranged in the form of two hexagons.</text>
</comment>
<comment type="similarity">
    <text evidence="11">Belongs to the glutamine synthetase family.</text>
</comment>
<feature type="initiator methionine" description="Removed" evidence="8">
    <location>
        <position position="1"/>
    </location>
</feature>
<feature type="chain" id="PRO_0000431888" description="Glutamine synthetase">
    <location>
        <begin position="2"/>
        <end position="468"/>
    </location>
</feature>
<feature type="domain" description="GS beta-grasp" evidence="6">
    <location>
        <begin position="11"/>
        <end position="96"/>
    </location>
</feature>
<feature type="domain" description="GS catalytic" evidence="7">
    <location>
        <begin position="104"/>
        <end position="468"/>
    </location>
</feature>
<feature type="binding site" evidence="5">
    <location>
        <position position="129"/>
    </location>
    <ligand>
        <name>Mg(2+)</name>
        <dbReference type="ChEBI" id="CHEBI:18420"/>
        <label>1</label>
    </ligand>
</feature>
<feature type="binding site" evidence="5">
    <location>
        <position position="131"/>
    </location>
    <ligand>
        <name>Mg(2+)</name>
        <dbReference type="ChEBI" id="CHEBI:18420"/>
        <label>2</label>
    </ligand>
</feature>
<feature type="binding site" evidence="5">
    <location>
        <position position="207"/>
    </location>
    <ligand>
        <name>ATP</name>
        <dbReference type="ChEBI" id="CHEBI:30616"/>
    </ligand>
</feature>
<feature type="binding site" evidence="5">
    <location>
        <position position="212"/>
    </location>
    <ligand>
        <name>Mg(2+)</name>
        <dbReference type="ChEBI" id="CHEBI:18420"/>
        <label>2</label>
    </ligand>
</feature>
<feature type="binding site" evidence="5">
    <location>
        <position position="220"/>
    </location>
    <ligand>
        <name>Mg(2+)</name>
        <dbReference type="ChEBI" id="CHEBI:18420"/>
        <label>2</label>
    </ligand>
</feature>
<feature type="binding site" evidence="5">
    <location>
        <begin position="264"/>
        <end position="265"/>
    </location>
    <ligand>
        <name>L-glutamate</name>
        <dbReference type="ChEBI" id="CHEBI:29985"/>
    </ligand>
</feature>
<feature type="binding site" evidence="3">
    <location>
        <position position="265"/>
    </location>
    <ligand>
        <name>L-glutamate</name>
        <dbReference type="ChEBI" id="CHEBI:29985"/>
    </ligand>
</feature>
<feature type="binding site" evidence="5">
    <location>
        <position position="269"/>
    </location>
    <ligand>
        <name>Mg(2+)</name>
        <dbReference type="ChEBI" id="CHEBI:18420"/>
        <label>1</label>
    </ligand>
</feature>
<feature type="binding site" evidence="5">
    <location>
        <begin position="271"/>
        <end position="273"/>
    </location>
    <ligand>
        <name>ATP</name>
        <dbReference type="ChEBI" id="CHEBI:30616"/>
    </ligand>
</feature>
<feature type="binding site" evidence="4">
    <location>
        <position position="273"/>
    </location>
    <ligand>
        <name>ATP</name>
        <dbReference type="ChEBI" id="CHEBI:30616"/>
    </ligand>
</feature>
<feature type="binding site" evidence="1">
    <location>
        <position position="321"/>
    </location>
    <ligand>
        <name>L-glutamate</name>
        <dbReference type="ChEBI" id="CHEBI:29985"/>
    </ligand>
</feature>
<feature type="binding site" evidence="1">
    <location>
        <position position="327"/>
    </location>
    <ligand>
        <name>L-glutamate</name>
        <dbReference type="ChEBI" id="CHEBI:29985"/>
    </ligand>
</feature>
<feature type="binding site" evidence="4">
    <location>
        <position position="339"/>
    </location>
    <ligand>
        <name>ATP</name>
        <dbReference type="ChEBI" id="CHEBI:30616"/>
    </ligand>
</feature>
<feature type="binding site" evidence="5">
    <location>
        <position position="339"/>
    </location>
    <ligand>
        <name>L-glutamate</name>
        <dbReference type="ChEBI" id="CHEBI:29985"/>
    </ligand>
</feature>
<feature type="binding site" evidence="5">
    <location>
        <position position="344"/>
    </location>
    <ligand>
        <name>ATP</name>
        <dbReference type="ChEBI" id="CHEBI:30616"/>
    </ligand>
</feature>
<feature type="binding site" evidence="4">
    <location>
        <position position="352"/>
    </location>
    <ligand>
        <name>ATP</name>
        <dbReference type="ChEBI" id="CHEBI:30616"/>
    </ligand>
</feature>
<feature type="binding site" evidence="5">
    <location>
        <position position="357"/>
    </location>
    <ligand>
        <name>Mg(2+)</name>
        <dbReference type="ChEBI" id="CHEBI:18420"/>
        <label>1</label>
    </ligand>
</feature>
<feature type="binding site" evidence="1">
    <location>
        <position position="359"/>
    </location>
    <ligand>
        <name>L-glutamate</name>
        <dbReference type="ChEBI" id="CHEBI:29985"/>
    </ligand>
</feature>
<feature type="modified residue" description="O-AMP-tyrosine" evidence="2 12">
    <location>
        <position position="397"/>
    </location>
</feature>
<proteinExistence type="evidence at protein level"/>
<reference key="1">
    <citation type="journal article" date="2006" name="Biosci. Biotechnol. Biochem.">
        <title>Cloning and expression of Pseudomonas taetrolens Y-30 gene encoding glutamine synthetase: an enzyme available for theanine production by coupled fermentation with energy transfer.</title>
        <authorList>
            <person name="Yamamoto S."/>
            <person name="Wakayama M."/>
            <person name="Tachiki T."/>
        </authorList>
    </citation>
    <scope>NUCLEOTIDE SEQUENCE [GENOMIC DNA]</scope>
    <scope>FUNCTION</scope>
    <scope>CATALYTIC ACTIVITY</scope>
    <scope>COFACTOR</scope>
    <scope>ACTIVITY REGULATION</scope>
    <scope>AMPYLATION AT TYR-397</scope>
    <scope>SUBUNIT</scope>
    <source>
        <strain>Y-30</strain>
    </source>
</reference>
<reference key="2">
    <citation type="journal article" date="2004" name="Biosci. Biotechnol. Biochem.">
        <title>Purification and characterization of glutamine synthetase of Pseudomonas taetrolens Y-30: an enzyme usable for production of theanine by coupling with the alcoholic fermentation system of baker's yeast.</title>
        <authorList>
            <person name="Yamamoto S."/>
            <person name="Uchimura K."/>
            <person name="Wakayama M."/>
            <person name="Tachiki T."/>
        </authorList>
    </citation>
    <scope>PROTEIN SEQUENCE OF 2-16</scope>
    <scope>FUNCTION</scope>
    <scope>CATALYTIC ACTIVITY</scope>
    <scope>COFACTOR</scope>
    <scope>BIOPHYSICOCHEMICAL PROPERTIES</scope>
    <scope>SUBUNIT</scope>
    <source>
        <strain>Y-30</strain>
    </source>
</reference>
<evidence type="ECO:0000250" key="1">
    <source>
        <dbReference type="UniProtKB" id="P0A1P6"/>
    </source>
</evidence>
<evidence type="ECO:0000250" key="2">
    <source>
        <dbReference type="UniProtKB" id="P0A9C5"/>
    </source>
</evidence>
<evidence type="ECO:0000250" key="3">
    <source>
        <dbReference type="UniProtKB" id="P12425"/>
    </source>
</evidence>
<evidence type="ECO:0000250" key="4">
    <source>
        <dbReference type="UniProtKB" id="P77961"/>
    </source>
</evidence>
<evidence type="ECO:0000250" key="5">
    <source>
        <dbReference type="UniProtKB" id="P9WN39"/>
    </source>
</evidence>
<evidence type="ECO:0000255" key="6">
    <source>
        <dbReference type="PROSITE-ProRule" id="PRU01330"/>
    </source>
</evidence>
<evidence type="ECO:0000255" key="7">
    <source>
        <dbReference type="PROSITE-ProRule" id="PRU01331"/>
    </source>
</evidence>
<evidence type="ECO:0000269" key="8">
    <source>
    </source>
</evidence>
<evidence type="ECO:0000269" key="9">
    <source>
    </source>
</evidence>
<evidence type="ECO:0000303" key="10">
    <source>
    </source>
</evidence>
<evidence type="ECO:0000305" key="11"/>
<evidence type="ECO:0000305" key="12">
    <source>
    </source>
</evidence>
<accession>Q3V5W6</accession>